<accession>A1D9Z7</accession>
<proteinExistence type="inferred from homology"/>
<name>KAPC_NEOFI</name>
<sequence>MQPALAPHPSAQDHADQVLHDQLLAAQHQHLTHPQQARPQPPAPQPPHMQPNTPARDQNNIDPAISGATMLTGPPQTPTQPDVTGQETPKTYGKRPLSTSKRAAQNRAAQRAFRQRKEAHIRELEGKVKAYENMGEAIKALQAENYQLREYIINLQSRLLDSQGEVPELPGNIDLSQPRSEIPVPPIPNSGTTTTAAPPPTAPQQPQPPHAQAPTSNDDMNSLNRIAVAGLGMRKPPTEEANYLGNNFQAQARRVRPDEGQTEASELPKQEQTHGLPLIS</sequence>
<evidence type="ECO:0000250" key="1"/>
<evidence type="ECO:0000256" key="2">
    <source>
        <dbReference type="SAM" id="MobiDB-lite"/>
    </source>
</evidence>
<evidence type="ECO:0000305" key="3"/>
<protein>
    <recommendedName>
        <fullName>Putative transcription factor kapC</fullName>
    </recommendedName>
</protein>
<gene>
    <name type="primary">kapC</name>
    <name type="ORF">NFIA_030610</name>
</gene>
<organism>
    <name type="scientific">Neosartorya fischeri (strain ATCC 1020 / DSM 3700 / CBS 544.65 / FGSC A1164 / JCM 1740 / NRRL 181 / WB 181)</name>
    <name type="common">Aspergillus fischerianus</name>
    <dbReference type="NCBI Taxonomy" id="331117"/>
    <lineage>
        <taxon>Eukaryota</taxon>
        <taxon>Fungi</taxon>
        <taxon>Dikarya</taxon>
        <taxon>Ascomycota</taxon>
        <taxon>Pezizomycotina</taxon>
        <taxon>Eurotiomycetes</taxon>
        <taxon>Eurotiomycetidae</taxon>
        <taxon>Eurotiales</taxon>
        <taxon>Aspergillaceae</taxon>
        <taxon>Aspergillus</taxon>
        <taxon>Aspergillus subgen. Fumigati</taxon>
    </lineage>
</organism>
<dbReference type="EMBL" id="DS027693">
    <property type="protein sequence ID" value="EAW20628.1"/>
    <property type="status" value="ALT_SEQ"/>
    <property type="molecule type" value="Genomic_DNA"/>
</dbReference>
<dbReference type="RefSeq" id="XP_001262525.1">
    <property type="nucleotide sequence ID" value="XM_001262524.1"/>
</dbReference>
<dbReference type="SMR" id="A1D9Z7"/>
<dbReference type="GeneID" id="4589128"/>
<dbReference type="KEGG" id="nfi:NFIA_030610"/>
<dbReference type="VEuPathDB" id="FungiDB:NFIA_030610"/>
<dbReference type="eggNOG" id="ENOG502SC5V">
    <property type="taxonomic scope" value="Eukaryota"/>
</dbReference>
<dbReference type="OrthoDB" id="2593073at2759"/>
<dbReference type="Proteomes" id="UP000006702">
    <property type="component" value="Unassembled WGS sequence"/>
</dbReference>
<dbReference type="GO" id="GO:0090575">
    <property type="term" value="C:RNA polymerase II transcription regulator complex"/>
    <property type="evidence" value="ECO:0007669"/>
    <property type="project" value="TreeGrafter"/>
</dbReference>
<dbReference type="GO" id="GO:0001228">
    <property type="term" value="F:DNA-binding transcription activator activity, RNA polymerase II-specific"/>
    <property type="evidence" value="ECO:0007669"/>
    <property type="project" value="TreeGrafter"/>
</dbReference>
<dbReference type="GO" id="GO:0000976">
    <property type="term" value="F:transcription cis-regulatory region binding"/>
    <property type="evidence" value="ECO:0007669"/>
    <property type="project" value="InterPro"/>
</dbReference>
<dbReference type="Gene3D" id="1.20.5.170">
    <property type="match status" value="1"/>
</dbReference>
<dbReference type="InterPro" id="IPR050936">
    <property type="entry name" value="AP-1-like"/>
</dbReference>
<dbReference type="InterPro" id="IPR004827">
    <property type="entry name" value="bZIP"/>
</dbReference>
<dbReference type="InterPro" id="IPR046347">
    <property type="entry name" value="bZIP_sf"/>
</dbReference>
<dbReference type="PANTHER" id="PTHR40621">
    <property type="entry name" value="TRANSCRIPTION FACTOR KAPC-RELATED"/>
    <property type="match status" value="1"/>
</dbReference>
<dbReference type="PANTHER" id="PTHR40621:SF11">
    <property type="entry name" value="TRANSCRIPTION FACTOR KAPC-RELATED"/>
    <property type="match status" value="1"/>
</dbReference>
<dbReference type="Pfam" id="PF00170">
    <property type="entry name" value="bZIP_1"/>
    <property type="match status" value="1"/>
</dbReference>
<dbReference type="SMART" id="SM00338">
    <property type="entry name" value="BRLZ"/>
    <property type="match status" value="1"/>
</dbReference>
<dbReference type="SUPFAM" id="SSF57959">
    <property type="entry name" value="Leucine zipper domain"/>
    <property type="match status" value="1"/>
</dbReference>
<dbReference type="PROSITE" id="PS00036">
    <property type="entry name" value="BZIP_BASIC"/>
    <property type="match status" value="1"/>
</dbReference>
<keyword id="KW-0238">DNA-binding</keyword>
<keyword id="KW-0539">Nucleus</keyword>
<keyword id="KW-1185">Reference proteome</keyword>
<keyword id="KW-0804">Transcription</keyword>
<keyword id="KW-0805">Transcription regulation</keyword>
<reference key="1">
    <citation type="journal article" date="2008" name="PLoS Genet.">
        <title>Genomic islands in the pathogenic filamentous fungus Aspergillus fumigatus.</title>
        <authorList>
            <person name="Fedorova N.D."/>
            <person name="Khaldi N."/>
            <person name="Joardar V.S."/>
            <person name="Maiti R."/>
            <person name="Amedeo P."/>
            <person name="Anderson M.J."/>
            <person name="Crabtree J."/>
            <person name="Silva J.C."/>
            <person name="Badger J.H."/>
            <person name="Albarraq A."/>
            <person name="Angiuoli S."/>
            <person name="Bussey H."/>
            <person name="Bowyer P."/>
            <person name="Cotty P.J."/>
            <person name="Dyer P.S."/>
            <person name="Egan A."/>
            <person name="Galens K."/>
            <person name="Fraser-Liggett C.M."/>
            <person name="Haas B.J."/>
            <person name="Inman J.M."/>
            <person name="Kent R."/>
            <person name="Lemieux S."/>
            <person name="Malavazi I."/>
            <person name="Orvis J."/>
            <person name="Roemer T."/>
            <person name="Ronning C.M."/>
            <person name="Sundaram J.P."/>
            <person name="Sutton G."/>
            <person name="Turner G."/>
            <person name="Venter J.C."/>
            <person name="White O.R."/>
            <person name="Whitty B.R."/>
            <person name="Youngman P."/>
            <person name="Wolfe K.H."/>
            <person name="Goldman G.H."/>
            <person name="Wortman J.R."/>
            <person name="Jiang B."/>
            <person name="Denning D.W."/>
            <person name="Nierman W.C."/>
        </authorList>
    </citation>
    <scope>NUCLEOTIDE SEQUENCE [LARGE SCALE GENOMIC DNA]</scope>
    <source>
        <strain>ATCC 1020 / DSM 3700 / CBS 544.65 / FGSC A1164 / JCM 1740 / NRRL 181 / WB 181</strain>
    </source>
</reference>
<comment type="function">
    <text evidence="1">Putative transcription factor.</text>
</comment>
<comment type="subcellular location">
    <subcellularLocation>
        <location evidence="1">Nucleus</location>
    </subcellularLocation>
</comment>
<comment type="similarity">
    <text evidence="3">Belongs to the bZIP family.</text>
</comment>
<comment type="sequence caution" evidence="3">
    <conflict type="erroneous gene model prediction">
        <sequence resource="EMBL-CDS" id="EAW20628"/>
    </conflict>
</comment>
<feature type="chain" id="PRO_0000306820" description="Putative transcription factor kapC">
    <location>
        <begin position="1"/>
        <end position="280"/>
    </location>
</feature>
<feature type="domain" description="bZIP">
    <location>
        <begin position="96"/>
        <end position="159"/>
    </location>
</feature>
<feature type="region of interest" description="Disordered" evidence="2">
    <location>
        <begin position="1"/>
        <end position="102"/>
    </location>
</feature>
<feature type="region of interest" description="Basic motif" evidence="1">
    <location>
        <begin position="97"/>
        <end position="120"/>
    </location>
</feature>
<feature type="region of interest" description="Leucine-zipper" evidence="1">
    <location>
        <begin position="124"/>
        <end position="155"/>
    </location>
</feature>
<feature type="region of interest" description="Disordered" evidence="2">
    <location>
        <begin position="169"/>
        <end position="280"/>
    </location>
</feature>
<feature type="compositionally biased region" description="Pro residues" evidence="2">
    <location>
        <begin position="39"/>
        <end position="49"/>
    </location>
</feature>
<feature type="compositionally biased region" description="Polar residues" evidence="2">
    <location>
        <begin position="79"/>
        <end position="89"/>
    </location>
</feature>
<feature type="compositionally biased region" description="Pro residues" evidence="2">
    <location>
        <begin position="197"/>
        <end position="211"/>
    </location>
</feature>